<gene>
    <name evidence="1" type="primary">lplT</name>
    <name type="ordered locus">SEN2852</name>
</gene>
<proteinExistence type="inferred from homology"/>
<name>LPLT_SALEP</name>
<dbReference type="EMBL" id="AM933172">
    <property type="protein sequence ID" value="CAR34430.1"/>
    <property type="molecule type" value="Genomic_DNA"/>
</dbReference>
<dbReference type="RefSeq" id="WP_000004693.1">
    <property type="nucleotide sequence ID" value="NC_011294.1"/>
</dbReference>
<dbReference type="SMR" id="B5QWU1"/>
<dbReference type="KEGG" id="set:SEN2852"/>
<dbReference type="HOGENOM" id="CLU_047399_0_0_6"/>
<dbReference type="Proteomes" id="UP000000613">
    <property type="component" value="Chromosome"/>
</dbReference>
<dbReference type="GO" id="GO:0005886">
    <property type="term" value="C:plasma membrane"/>
    <property type="evidence" value="ECO:0007669"/>
    <property type="project" value="UniProtKB-SubCell"/>
</dbReference>
<dbReference type="GO" id="GO:0051978">
    <property type="term" value="F:lysophospholipid:sodium symporter activity"/>
    <property type="evidence" value="ECO:0007669"/>
    <property type="project" value="InterPro"/>
</dbReference>
<dbReference type="CDD" id="cd06173">
    <property type="entry name" value="MFS_MefA_like"/>
    <property type="match status" value="1"/>
</dbReference>
<dbReference type="Gene3D" id="1.20.1250.20">
    <property type="entry name" value="MFS general substrate transporter like domains"/>
    <property type="match status" value="1"/>
</dbReference>
<dbReference type="HAMAP" id="MF_01585">
    <property type="entry name" value="MFS_LplT"/>
    <property type="match status" value="1"/>
</dbReference>
<dbReference type="InterPro" id="IPR023727">
    <property type="entry name" value="LysoPLipid__transptr_LplT"/>
</dbReference>
<dbReference type="InterPro" id="IPR011701">
    <property type="entry name" value="MFS"/>
</dbReference>
<dbReference type="InterPro" id="IPR036259">
    <property type="entry name" value="MFS_trans_sf"/>
</dbReference>
<dbReference type="NCBIfam" id="NF008397">
    <property type="entry name" value="PRK11195.1"/>
    <property type="match status" value="1"/>
</dbReference>
<dbReference type="PANTHER" id="PTHR43266">
    <property type="entry name" value="MACROLIDE-EFFLUX PROTEIN"/>
    <property type="match status" value="1"/>
</dbReference>
<dbReference type="PANTHER" id="PTHR43266:SF2">
    <property type="entry name" value="MAJOR FACILITATOR SUPERFAMILY (MFS) PROFILE DOMAIN-CONTAINING PROTEIN"/>
    <property type="match status" value="1"/>
</dbReference>
<dbReference type="Pfam" id="PF07690">
    <property type="entry name" value="MFS_1"/>
    <property type="match status" value="1"/>
</dbReference>
<dbReference type="SUPFAM" id="SSF103473">
    <property type="entry name" value="MFS general substrate transporter"/>
    <property type="match status" value="1"/>
</dbReference>
<accession>B5QWU1</accession>
<protein>
    <recommendedName>
        <fullName evidence="1">Lysophospholipid transporter LplT</fullName>
    </recommendedName>
</protein>
<evidence type="ECO:0000255" key="1">
    <source>
        <dbReference type="HAMAP-Rule" id="MF_01585"/>
    </source>
</evidence>
<sequence length="400" mass="41590">MSESVRTNTSIWSKGMLSVIVAQFLSAFGDNALLFATLALLKAQFYPDWSQPVLQMVFVGAYILFAPFVGQMADSFAKGRVMMVANGLKLAGAAGICLGVNPFVGYTLVGIGAAAYSPAKYGILGELTTGDKLVKANGLMEASTIAAILLGSVAGGVLADWHVIAALVACALAYAGAVAANLFIPKLVAARPGQSWRLSAMTRSFFSACVVLWRNGETRFSLVGTGLFWGAGVTLRFLLVLWVPVALGITDNATPTYLNAMVAVGIVVGAGAAAKLVTLETVSRCMPAGILIGVVVAIFSLQHALLPAYALLLLIGMLGGFFVVPLNALLQERGKKSVGAGNAIAVQNLGENSAMLLMLGLYSLAVLVGVPAVAIGIGFGVLFALAIAALWIWQRRQASY</sequence>
<keyword id="KW-0997">Cell inner membrane</keyword>
<keyword id="KW-1003">Cell membrane</keyword>
<keyword id="KW-0445">Lipid transport</keyword>
<keyword id="KW-0472">Membrane</keyword>
<keyword id="KW-0812">Transmembrane</keyword>
<keyword id="KW-1133">Transmembrane helix</keyword>
<keyword id="KW-0813">Transport</keyword>
<comment type="function">
    <text evidence="1">Catalyzes the facilitated diffusion of 2-acyl-glycero-3-phosphoethanolamine (2-acyl-GPE) into the cell.</text>
</comment>
<comment type="subcellular location">
    <subcellularLocation>
        <location evidence="1">Cell inner membrane</location>
        <topology evidence="1">Multi-pass membrane protein</topology>
    </subcellularLocation>
</comment>
<comment type="similarity">
    <text evidence="1">Belongs to the major facilitator superfamily. LplT (TC 2.A.1.42) family.</text>
</comment>
<feature type="chain" id="PRO_1000201275" description="Lysophospholipid transporter LplT">
    <location>
        <begin position="1"/>
        <end position="400"/>
    </location>
</feature>
<feature type="transmembrane region" description="Helical" evidence="1">
    <location>
        <begin position="19"/>
        <end position="39"/>
    </location>
</feature>
<feature type="transmembrane region" description="Helical" evidence="1">
    <location>
        <begin position="53"/>
        <end position="73"/>
    </location>
</feature>
<feature type="transmembrane region" description="Helical" evidence="1">
    <location>
        <begin position="91"/>
        <end position="111"/>
    </location>
</feature>
<feature type="transmembrane region" description="Helical" evidence="1">
    <location>
        <begin position="139"/>
        <end position="159"/>
    </location>
</feature>
<feature type="transmembrane region" description="Helical" evidence="1">
    <location>
        <begin position="164"/>
        <end position="184"/>
    </location>
</feature>
<feature type="transmembrane region" description="Helical" evidence="1">
    <location>
        <begin position="195"/>
        <end position="213"/>
    </location>
</feature>
<feature type="transmembrane region" description="Helical" evidence="1">
    <location>
        <begin position="227"/>
        <end position="247"/>
    </location>
</feature>
<feature type="transmembrane region" description="Helical" evidence="1">
    <location>
        <begin position="257"/>
        <end position="277"/>
    </location>
</feature>
<feature type="transmembrane region" description="Helical" evidence="1">
    <location>
        <begin position="281"/>
        <end position="301"/>
    </location>
</feature>
<feature type="transmembrane region" description="Helical" evidence="1">
    <location>
        <begin position="304"/>
        <end position="324"/>
    </location>
</feature>
<feature type="transmembrane region" description="Helical" evidence="1">
    <location>
        <begin position="352"/>
        <end position="372"/>
    </location>
</feature>
<feature type="transmembrane region" description="Helical" evidence="1">
    <location>
        <begin position="373"/>
        <end position="393"/>
    </location>
</feature>
<reference key="1">
    <citation type="journal article" date="2008" name="Genome Res.">
        <title>Comparative genome analysis of Salmonella enteritidis PT4 and Salmonella gallinarum 287/91 provides insights into evolutionary and host adaptation pathways.</title>
        <authorList>
            <person name="Thomson N.R."/>
            <person name="Clayton D.J."/>
            <person name="Windhorst D."/>
            <person name="Vernikos G."/>
            <person name="Davidson S."/>
            <person name="Churcher C."/>
            <person name="Quail M.A."/>
            <person name="Stevens M."/>
            <person name="Jones M.A."/>
            <person name="Watson M."/>
            <person name="Barron A."/>
            <person name="Layton A."/>
            <person name="Pickard D."/>
            <person name="Kingsley R.A."/>
            <person name="Bignell A."/>
            <person name="Clark L."/>
            <person name="Harris B."/>
            <person name="Ormond D."/>
            <person name="Abdellah Z."/>
            <person name="Brooks K."/>
            <person name="Cherevach I."/>
            <person name="Chillingworth T."/>
            <person name="Woodward J."/>
            <person name="Norberczak H."/>
            <person name="Lord A."/>
            <person name="Arrowsmith C."/>
            <person name="Jagels K."/>
            <person name="Moule S."/>
            <person name="Mungall K."/>
            <person name="Saunders M."/>
            <person name="Whitehead S."/>
            <person name="Chabalgoity J.A."/>
            <person name="Maskell D."/>
            <person name="Humphreys T."/>
            <person name="Roberts M."/>
            <person name="Barrow P.A."/>
            <person name="Dougan G."/>
            <person name="Parkhill J."/>
        </authorList>
    </citation>
    <scope>NUCLEOTIDE SEQUENCE [LARGE SCALE GENOMIC DNA]</scope>
    <source>
        <strain>P125109</strain>
    </source>
</reference>
<organism>
    <name type="scientific">Salmonella enteritidis PT4 (strain P125109)</name>
    <dbReference type="NCBI Taxonomy" id="550537"/>
    <lineage>
        <taxon>Bacteria</taxon>
        <taxon>Pseudomonadati</taxon>
        <taxon>Pseudomonadota</taxon>
        <taxon>Gammaproteobacteria</taxon>
        <taxon>Enterobacterales</taxon>
        <taxon>Enterobacteriaceae</taxon>
        <taxon>Salmonella</taxon>
    </lineage>
</organism>